<feature type="chain" id="PRO_1000084197" description="Histidinol-phosphate aminotransferase">
    <location>
        <begin position="1"/>
        <end position="365"/>
    </location>
</feature>
<feature type="modified residue" description="N6-(pyridoxal phosphate)lysine" evidence="1">
    <location>
        <position position="220"/>
    </location>
</feature>
<comment type="catalytic activity">
    <reaction evidence="1">
        <text>L-histidinol phosphate + 2-oxoglutarate = 3-(imidazol-4-yl)-2-oxopropyl phosphate + L-glutamate</text>
        <dbReference type="Rhea" id="RHEA:23744"/>
        <dbReference type="ChEBI" id="CHEBI:16810"/>
        <dbReference type="ChEBI" id="CHEBI:29985"/>
        <dbReference type="ChEBI" id="CHEBI:57766"/>
        <dbReference type="ChEBI" id="CHEBI:57980"/>
        <dbReference type="EC" id="2.6.1.9"/>
    </reaction>
</comment>
<comment type="cofactor">
    <cofactor evidence="1">
        <name>pyridoxal 5'-phosphate</name>
        <dbReference type="ChEBI" id="CHEBI:597326"/>
    </cofactor>
</comment>
<comment type="pathway">
    <text evidence="1">Amino-acid biosynthesis; L-histidine biosynthesis; L-histidine from 5-phospho-alpha-D-ribose 1-diphosphate: step 7/9.</text>
</comment>
<comment type="subunit">
    <text evidence="1">Homodimer.</text>
</comment>
<comment type="similarity">
    <text evidence="1">Belongs to the class-II pyridoxal-phosphate-dependent aminotransferase family. Histidinol-phosphate aminotransferase subfamily.</text>
</comment>
<name>HIS8_NEIM0</name>
<gene>
    <name evidence="1" type="primary">hisC</name>
    <name type="ordered locus">NMCC_1486</name>
</gene>
<dbReference type="EC" id="2.6.1.9" evidence="1"/>
<dbReference type="EMBL" id="CP000381">
    <property type="protein sequence ID" value="ABX73650.1"/>
    <property type="molecule type" value="Genomic_DNA"/>
</dbReference>
<dbReference type="RefSeq" id="WP_002212810.1">
    <property type="nucleotide sequence ID" value="NC_010120.1"/>
</dbReference>
<dbReference type="SMR" id="A9M185"/>
<dbReference type="GeneID" id="93387805"/>
<dbReference type="KEGG" id="nmn:NMCC_1486"/>
<dbReference type="HOGENOM" id="CLU_017584_3_1_4"/>
<dbReference type="UniPathway" id="UPA00031">
    <property type="reaction ID" value="UER00012"/>
</dbReference>
<dbReference type="Proteomes" id="UP000001177">
    <property type="component" value="Chromosome"/>
</dbReference>
<dbReference type="GO" id="GO:0004400">
    <property type="term" value="F:histidinol-phosphate transaminase activity"/>
    <property type="evidence" value="ECO:0007669"/>
    <property type="project" value="UniProtKB-UniRule"/>
</dbReference>
<dbReference type="GO" id="GO:0030170">
    <property type="term" value="F:pyridoxal phosphate binding"/>
    <property type="evidence" value="ECO:0007669"/>
    <property type="project" value="InterPro"/>
</dbReference>
<dbReference type="GO" id="GO:0000105">
    <property type="term" value="P:L-histidine biosynthetic process"/>
    <property type="evidence" value="ECO:0007669"/>
    <property type="project" value="UniProtKB-UniRule"/>
</dbReference>
<dbReference type="CDD" id="cd00609">
    <property type="entry name" value="AAT_like"/>
    <property type="match status" value="1"/>
</dbReference>
<dbReference type="Gene3D" id="3.90.1150.10">
    <property type="entry name" value="Aspartate Aminotransferase, domain 1"/>
    <property type="match status" value="1"/>
</dbReference>
<dbReference type="Gene3D" id="3.40.640.10">
    <property type="entry name" value="Type I PLP-dependent aspartate aminotransferase-like (Major domain)"/>
    <property type="match status" value="1"/>
</dbReference>
<dbReference type="HAMAP" id="MF_01023">
    <property type="entry name" value="HisC_aminotrans_2"/>
    <property type="match status" value="1"/>
</dbReference>
<dbReference type="InterPro" id="IPR004839">
    <property type="entry name" value="Aminotransferase_I/II_large"/>
</dbReference>
<dbReference type="InterPro" id="IPR005861">
    <property type="entry name" value="HisP_aminotrans"/>
</dbReference>
<dbReference type="InterPro" id="IPR015424">
    <property type="entry name" value="PyrdxlP-dep_Trfase"/>
</dbReference>
<dbReference type="InterPro" id="IPR015421">
    <property type="entry name" value="PyrdxlP-dep_Trfase_major"/>
</dbReference>
<dbReference type="InterPro" id="IPR015422">
    <property type="entry name" value="PyrdxlP-dep_Trfase_small"/>
</dbReference>
<dbReference type="NCBIfam" id="TIGR01141">
    <property type="entry name" value="hisC"/>
    <property type="match status" value="1"/>
</dbReference>
<dbReference type="PANTHER" id="PTHR42885:SF2">
    <property type="entry name" value="HISTIDINOL-PHOSPHATE AMINOTRANSFERASE"/>
    <property type="match status" value="1"/>
</dbReference>
<dbReference type="PANTHER" id="PTHR42885">
    <property type="entry name" value="HISTIDINOL-PHOSPHATE AMINOTRANSFERASE-RELATED"/>
    <property type="match status" value="1"/>
</dbReference>
<dbReference type="Pfam" id="PF00155">
    <property type="entry name" value="Aminotran_1_2"/>
    <property type="match status" value="1"/>
</dbReference>
<dbReference type="SUPFAM" id="SSF53383">
    <property type="entry name" value="PLP-dependent transferases"/>
    <property type="match status" value="1"/>
</dbReference>
<reference key="1">
    <citation type="journal article" date="2008" name="Genomics">
        <title>Characterization of ST-4821 complex, a unique Neisseria meningitidis clone.</title>
        <authorList>
            <person name="Peng J."/>
            <person name="Yang L."/>
            <person name="Yang F."/>
            <person name="Yang J."/>
            <person name="Yan Y."/>
            <person name="Nie H."/>
            <person name="Zhang X."/>
            <person name="Xiong Z."/>
            <person name="Jiang Y."/>
            <person name="Cheng F."/>
            <person name="Xu X."/>
            <person name="Chen S."/>
            <person name="Sun L."/>
            <person name="Li W."/>
            <person name="Shen Y."/>
            <person name="Shao Z."/>
            <person name="Liang X."/>
            <person name="Xu J."/>
            <person name="Jin Q."/>
        </authorList>
    </citation>
    <scope>NUCLEOTIDE SEQUENCE [LARGE SCALE GENOMIC DNA]</scope>
    <source>
        <strain>053442</strain>
    </source>
</reference>
<evidence type="ECO:0000255" key="1">
    <source>
        <dbReference type="HAMAP-Rule" id="MF_01023"/>
    </source>
</evidence>
<protein>
    <recommendedName>
        <fullName evidence="1">Histidinol-phosphate aminotransferase</fullName>
        <ecNumber evidence="1">2.6.1.9</ecNumber>
    </recommendedName>
    <alternativeName>
        <fullName evidence="1">Imidazole acetol-phosphate transaminase</fullName>
    </alternativeName>
</protein>
<organism>
    <name type="scientific">Neisseria meningitidis serogroup C (strain 053442)</name>
    <dbReference type="NCBI Taxonomy" id="374833"/>
    <lineage>
        <taxon>Bacteria</taxon>
        <taxon>Pseudomonadati</taxon>
        <taxon>Pseudomonadota</taxon>
        <taxon>Betaproteobacteria</taxon>
        <taxon>Neisseriales</taxon>
        <taxon>Neisseriaceae</taxon>
        <taxon>Neisseria</taxon>
    </lineage>
</organism>
<accession>A9M185</accession>
<keyword id="KW-0028">Amino-acid biosynthesis</keyword>
<keyword id="KW-0032">Aminotransferase</keyword>
<keyword id="KW-0368">Histidine biosynthesis</keyword>
<keyword id="KW-0663">Pyridoxal phosphate</keyword>
<keyword id="KW-0808">Transferase</keyword>
<sequence length="365" mass="39848">MKSVRSFIRDDIQAMSAYQIADVPPGFAKLDSMESPVHPFAGHETLLQEWQARLAAAPIHLYPNPSGSGLQEALRSAFDIPDCADIALGNGSDELIQFITMLTAKPGAAMLAAEPSFVMYRHNAALYGMDYVGVPLNGDFTLNLPAVLEAVRKHRPALTFIAYPNNPTGVCFTRAEIEAVIEASDGIVVVDEAYGAFNGDSFLPQAGSIPNLIVMRTVSKIGFAGLRIGYAAGCPEVIGELQKILPPYNMNQLSLTTAKLALQHYGIISANIDSLKNERERMFAELGKICRLNTFPSQANFITIRVPDADLLFDTLKQNRILVKKLHGAHPLLEHCLRITVGSPAQNDAVLNIIRQLYCQPTDFL</sequence>
<proteinExistence type="inferred from homology"/>